<protein>
    <recommendedName>
        <fullName evidence="1">Small ribosomal subunit protein bS21</fullName>
    </recommendedName>
    <alternativeName>
        <fullName evidence="3">30S ribosomal protein S21</fullName>
    </alternativeName>
</protein>
<organism>
    <name type="scientific">Salmonella arizonae (strain ATCC BAA-731 / CDC346-86 / RSK2980)</name>
    <dbReference type="NCBI Taxonomy" id="41514"/>
    <lineage>
        <taxon>Bacteria</taxon>
        <taxon>Pseudomonadati</taxon>
        <taxon>Pseudomonadota</taxon>
        <taxon>Gammaproteobacteria</taxon>
        <taxon>Enterobacterales</taxon>
        <taxon>Enterobacteriaceae</taxon>
        <taxon>Salmonella</taxon>
    </lineage>
</organism>
<keyword id="KW-1185">Reference proteome</keyword>
<keyword id="KW-0687">Ribonucleoprotein</keyword>
<keyword id="KW-0689">Ribosomal protein</keyword>
<comment type="similarity">
    <text evidence="1">Belongs to the bacterial ribosomal protein bS21 family.</text>
</comment>
<feature type="chain" id="PRO_1000079417" description="Small ribosomal subunit protein bS21">
    <location>
        <begin position="1"/>
        <end position="71"/>
    </location>
</feature>
<feature type="region of interest" description="Disordered" evidence="2">
    <location>
        <begin position="43"/>
        <end position="71"/>
    </location>
</feature>
<feature type="compositionally biased region" description="Basic residues" evidence="2">
    <location>
        <begin position="46"/>
        <end position="59"/>
    </location>
</feature>
<feature type="compositionally biased region" description="Basic and acidic residues" evidence="2">
    <location>
        <begin position="60"/>
        <end position="71"/>
    </location>
</feature>
<name>RS21_SALAR</name>
<gene>
    <name evidence="1" type="primary">rpsU</name>
    <name type="ordered locus">SARI_04420</name>
</gene>
<sequence>MPVIKVRENEPFDVALRRFKRSCEKAGVLAEVRRREFYEKPTTERKRAKASAVKRHAKKLARENARRTRLY</sequence>
<proteinExistence type="inferred from homology"/>
<dbReference type="EMBL" id="CP000880">
    <property type="protein sequence ID" value="ABX24197.1"/>
    <property type="molecule type" value="Genomic_DNA"/>
</dbReference>
<dbReference type="SMR" id="A9MPV4"/>
<dbReference type="STRING" id="41514.SARI_04420"/>
<dbReference type="KEGG" id="ses:SARI_04420"/>
<dbReference type="HOGENOM" id="CLU_159258_1_0_6"/>
<dbReference type="Proteomes" id="UP000002084">
    <property type="component" value="Chromosome"/>
</dbReference>
<dbReference type="GO" id="GO:1990904">
    <property type="term" value="C:ribonucleoprotein complex"/>
    <property type="evidence" value="ECO:0007669"/>
    <property type="project" value="UniProtKB-KW"/>
</dbReference>
<dbReference type="GO" id="GO:0005840">
    <property type="term" value="C:ribosome"/>
    <property type="evidence" value="ECO:0007669"/>
    <property type="project" value="UniProtKB-KW"/>
</dbReference>
<dbReference type="GO" id="GO:0003735">
    <property type="term" value="F:structural constituent of ribosome"/>
    <property type="evidence" value="ECO:0007669"/>
    <property type="project" value="InterPro"/>
</dbReference>
<dbReference type="GO" id="GO:0006412">
    <property type="term" value="P:translation"/>
    <property type="evidence" value="ECO:0007669"/>
    <property type="project" value="UniProtKB-UniRule"/>
</dbReference>
<dbReference type="FunFam" id="1.20.5.1150:FF:000001">
    <property type="entry name" value="30S ribosomal protein S21"/>
    <property type="match status" value="1"/>
</dbReference>
<dbReference type="Gene3D" id="1.20.5.1150">
    <property type="entry name" value="Ribosomal protein S8"/>
    <property type="match status" value="1"/>
</dbReference>
<dbReference type="HAMAP" id="MF_00358">
    <property type="entry name" value="Ribosomal_bS21"/>
    <property type="match status" value="1"/>
</dbReference>
<dbReference type="InterPro" id="IPR001911">
    <property type="entry name" value="Ribosomal_bS21"/>
</dbReference>
<dbReference type="InterPro" id="IPR018278">
    <property type="entry name" value="Ribosomal_bS21_CS"/>
</dbReference>
<dbReference type="InterPro" id="IPR038380">
    <property type="entry name" value="Ribosomal_bS21_sf"/>
</dbReference>
<dbReference type="NCBIfam" id="TIGR00030">
    <property type="entry name" value="S21p"/>
    <property type="match status" value="1"/>
</dbReference>
<dbReference type="PANTHER" id="PTHR21109">
    <property type="entry name" value="MITOCHONDRIAL 28S RIBOSOMAL PROTEIN S21"/>
    <property type="match status" value="1"/>
</dbReference>
<dbReference type="PANTHER" id="PTHR21109:SF22">
    <property type="entry name" value="SMALL RIBOSOMAL SUBUNIT PROTEIN BS21"/>
    <property type="match status" value="1"/>
</dbReference>
<dbReference type="Pfam" id="PF01165">
    <property type="entry name" value="Ribosomal_S21"/>
    <property type="match status" value="1"/>
</dbReference>
<dbReference type="PRINTS" id="PR00976">
    <property type="entry name" value="RIBOSOMALS21"/>
</dbReference>
<dbReference type="PROSITE" id="PS01181">
    <property type="entry name" value="RIBOSOMAL_S21"/>
    <property type="match status" value="1"/>
</dbReference>
<reference key="1">
    <citation type="submission" date="2007-11" db="EMBL/GenBank/DDBJ databases">
        <authorList>
            <consortium name="The Salmonella enterica serovar Arizonae Genome Sequencing Project"/>
            <person name="McClelland M."/>
            <person name="Sanderson E.K."/>
            <person name="Porwollik S."/>
            <person name="Spieth J."/>
            <person name="Clifton W.S."/>
            <person name="Fulton R."/>
            <person name="Chunyan W."/>
            <person name="Wollam A."/>
            <person name="Shah N."/>
            <person name="Pepin K."/>
            <person name="Bhonagiri V."/>
            <person name="Nash W."/>
            <person name="Johnson M."/>
            <person name="Thiruvilangam P."/>
            <person name="Wilson R."/>
        </authorList>
    </citation>
    <scope>NUCLEOTIDE SEQUENCE [LARGE SCALE GENOMIC DNA]</scope>
    <source>
        <strain>ATCC BAA-731 / CDC346-86 / RSK2980</strain>
    </source>
</reference>
<evidence type="ECO:0000255" key="1">
    <source>
        <dbReference type="HAMAP-Rule" id="MF_00358"/>
    </source>
</evidence>
<evidence type="ECO:0000256" key="2">
    <source>
        <dbReference type="SAM" id="MobiDB-lite"/>
    </source>
</evidence>
<evidence type="ECO:0000305" key="3"/>
<accession>A9MPV4</accession>